<protein>
    <recommendedName>
        <fullName evidence="1">Phosphate import ATP-binding protein PstB</fullName>
        <ecNumber evidence="1">7.3.2.1</ecNumber>
    </recommendedName>
    <alternativeName>
        <fullName evidence="1">ABC phosphate transporter</fullName>
    </alternativeName>
    <alternativeName>
        <fullName evidence="1">Phosphate-transporting ATPase</fullName>
    </alternativeName>
</protein>
<reference key="1">
    <citation type="submission" date="1999-01" db="EMBL/GenBank/DDBJ databases">
        <authorList>
            <person name="Pinho M.G."/>
            <person name="Wu S."/>
            <person name="Ludovice A.M."/>
            <person name="Filipe S.R."/>
            <person name="de Lencastre H."/>
        </authorList>
    </citation>
    <scope>NUCLEOTIDE SEQUENCE [GENOMIC DNA]</scope>
</reference>
<reference key="2">
    <citation type="journal article" date="2005" name="J. Bacteriol.">
        <title>Insights on evolution of virulence and resistance from the complete genome analysis of an early methicillin-resistant Staphylococcus aureus strain and a biofilm-producing methicillin-resistant Staphylococcus epidermidis strain.</title>
        <authorList>
            <person name="Gill S.R."/>
            <person name="Fouts D.E."/>
            <person name="Archer G.L."/>
            <person name="Mongodin E.F."/>
            <person name="DeBoy R.T."/>
            <person name="Ravel J."/>
            <person name="Paulsen I.T."/>
            <person name="Kolonay J.F."/>
            <person name="Brinkac L.M."/>
            <person name="Beanan M.J."/>
            <person name="Dodson R.J."/>
            <person name="Daugherty S.C."/>
            <person name="Madupu R."/>
            <person name="Angiuoli S.V."/>
            <person name="Durkin A.S."/>
            <person name="Haft D.H."/>
            <person name="Vamathevan J.J."/>
            <person name="Khouri H."/>
            <person name="Utterback T.R."/>
            <person name="Lee C."/>
            <person name="Dimitrov G."/>
            <person name="Jiang L."/>
            <person name="Qin H."/>
            <person name="Weidman J."/>
            <person name="Tran K."/>
            <person name="Kang K.H."/>
            <person name="Hance I.R."/>
            <person name="Nelson K.E."/>
            <person name="Fraser C.M."/>
        </authorList>
    </citation>
    <scope>NUCLEOTIDE SEQUENCE [LARGE SCALE GENOMIC DNA]</scope>
    <source>
        <strain>COL</strain>
    </source>
</reference>
<feature type="chain" id="PRO_0000092882" description="Phosphate import ATP-binding protein PstB">
    <location>
        <begin position="1"/>
        <end position="283"/>
    </location>
</feature>
<feature type="domain" description="ABC transporter" evidence="1">
    <location>
        <begin position="37"/>
        <end position="278"/>
    </location>
</feature>
<feature type="region of interest" description="Disordered" evidence="2">
    <location>
        <begin position="1"/>
        <end position="32"/>
    </location>
</feature>
<feature type="compositionally biased region" description="Polar residues" evidence="2">
    <location>
        <begin position="1"/>
        <end position="20"/>
    </location>
</feature>
<feature type="binding site" evidence="1">
    <location>
        <begin position="69"/>
        <end position="76"/>
    </location>
    <ligand>
        <name>ATP</name>
        <dbReference type="ChEBI" id="CHEBI:30616"/>
    </ligand>
</feature>
<comment type="function">
    <text evidence="1">Part of the ABC transporter complex PstSACB involved in phosphate import. Responsible for energy coupling to the transport system.</text>
</comment>
<comment type="catalytic activity">
    <reaction evidence="1">
        <text>phosphate(out) + ATP + H2O = ADP + 2 phosphate(in) + H(+)</text>
        <dbReference type="Rhea" id="RHEA:24440"/>
        <dbReference type="ChEBI" id="CHEBI:15377"/>
        <dbReference type="ChEBI" id="CHEBI:15378"/>
        <dbReference type="ChEBI" id="CHEBI:30616"/>
        <dbReference type="ChEBI" id="CHEBI:43474"/>
        <dbReference type="ChEBI" id="CHEBI:456216"/>
        <dbReference type="EC" id="7.3.2.1"/>
    </reaction>
</comment>
<comment type="subunit">
    <text evidence="1">The complex is composed of two ATP-binding proteins (PstB), two transmembrane proteins (PstC and PstA) and a solute-binding protein (PstS).</text>
</comment>
<comment type="subcellular location">
    <subcellularLocation>
        <location evidence="1">Cell membrane</location>
        <topology evidence="1">Peripheral membrane protein</topology>
    </subcellularLocation>
</comment>
<comment type="similarity">
    <text evidence="1">Belongs to the ABC transporter superfamily. Phosphate importer (TC 3.A.1.7) family.</text>
</comment>
<keyword id="KW-0067">ATP-binding</keyword>
<keyword id="KW-1003">Cell membrane</keyword>
<keyword id="KW-0472">Membrane</keyword>
<keyword id="KW-0547">Nucleotide-binding</keyword>
<keyword id="KW-0592">Phosphate transport</keyword>
<keyword id="KW-1278">Translocase</keyword>
<keyword id="KW-0813">Transport</keyword>
<dbReference type="EC" id="7.3.2.1" evidence="1"/>
<dbReference type="EMBL" id="AJ132347">
    <property type="protein sequence ID" value="CAC22283.1"/>
    <property type="molecule type" value="Genomic_DNA"/>
</dbReference>
<dbReference type="EMBL" id="CP000046">
    <property type="protein sequence ID" value="AAW38166.1"/>
    <property type="molecule type" value="Genomic_DNA"/>
</dbReference>
<dbReference type="RefSeq" id="WP_000079447.1">
    <property type="nucleotide sequence ID" value="NZ_JBGOFO010000003.1"/>
</dbReference>
<dbReference type="SMR" id="P69881"/>
<dbReference type="KEGG" id="sac:SACOL1421"/>
<dbReference type="HOGENOM" id="CLU_000604_1_22_9"/>
<dbReference type="Proteomes" id="UP000000530">
    <property type="component" value="Chromosome"/>
</dbReference>
<dbReference type="GO" id="GO:0005886">
    <property type="term" value="C:plasma membrane"/>
    <property type="evidence" value="ECO:0007669"/>
    <property type="project" value="UniProtKB-SubCell"/>
</dbReference>
<dbReference type="GO" id="GO:0005524">
    <property type="term" value="F:ATP binding"/>
    <property type="evidence" value="ECO:0007669"/>
    <property type="project" value="UniProtKB-KW"/>
</dbReference>
<dbReference type="GO" id="GO:0016887">
    <property type="term" value="F:ATP hydrolysis activity"/>
    <property type="evidence" value="ECO:0007669"/>
    <property type="project" value="InterPro"/>
</dbReference>
<dbReference type="GO" id="GO:0015415">
    <property type="term" value="F:ATPase-coupled phosphate ion transmembrane transporter activity"/>
    <property type="evidence" value="ECO:0007669"/>
    <property type="project" value="UniProtKB-EC"/>
</dbReference>
<dbReference type="GO" id="GO:0035435">
    <property type="term" value="P:phosphate ion transmembrane transport"/>
    <property type="evidence" value="ECO:0007669"/>
    <property type="project" value="InterPro"/>
</dbReference>
<dbReference type="CDD" id="cd03260">
    <property type="entry name" value="ABC_PstB_phosphate_transporter"/>
    <property type="match status" value="1"/>
</dbReference>
<dbReference type="Gene3D" id="3.40.50.300">
    <property type="entry name" value="P-loop containing nucleotide triphosphate hydrolases"/>
    <property type="match status" value="1"/>
</dbReference>
<dbReference type="InterPro" id="IPR003593">
    <property type="entry name" value="AAA+_ATPase"/>
</dbReference>
<dbReference type="InterPro" id="IPR003439">
    <property type="entry name" value="ABC_transporter-like_ATP-bd"/>
</dbReference>
<dbReference type="InterPro" id="IPR017871">
    <property type="entry name" value="ABC_transporter-like_CS"/>
</dbReference>
<dbReference type="InterPro" id="IPR027417">
    <property type="entry name" value="P-loop_NTPase"/>
</dbReference>
<dbReference type="InterPro" id="IPR005670">
    <property type="entry name" value="PstB-like"/>
</dbReference>
<dbReference type="NCBIfam" id="TIGR00972">
    <property type="entry name" value="3a0107s01c2"/>
    <property type="match status" value="1"/>
</dbReference>
<dbReference type="PANTHER" id="PTHR43423">
    <property type="entry name" value="ABC TRANSPORTER I FAMILY MEMBER 17"/>
    <property type="match status" value="1"/>
</dbReference>
<dbReference type="PANTHER" id="PTHR43423:SF1">
    <property type="entry name" value="ABC TRANSPORTER I FAMILY MEMBER 17"/>
    <property type="match status" value="1"/>
</dbReference>
<dbReference type="Pfam" id="PF00005">
    <property type="entry name" value="ABC_tran"/>
    <property type="match status" value="1"/>
</dbReference>
<dbReference type="SMART" id="SM00382">
    <property type="entry name" value="AAA"/>
    <property type="match status" value="1"/>
</dbReference>
<dbReference type="SUPFAM" id="SSF52540">
    <property type="entry name" value="P-loop containing nucleoside triphosphate hydrolases"/>
    <property type="match status" value="1"/>
</dbReference>
<dbReference type="PROSITE" id="PS00211">
    <property type="entry name" value="ABC_TRANSPORTER_1"/>
    <property type="match status" value="1"/>
</dbReference>
<dbReference type="PROSITE" id="PS50893">
    <property type="entry name" value="ABC_TRANSPORTER_2"/>
    <property type="match status" value="1"/>
</dbReference>
<dbReference type="PROSITE" id="PS51238">
    <property type="entry name" value="PSTB"/>
    <property type="match status" value="1"/>
</dbReference>
<proteinExistence type="inferred from homology"/>
<evidence type="ECO:0000255" key="1">
    <source>
        <dbReference type="HAMAP-Rule" id="MF_01702"/>
    </source>
</evidence>
<evidence type="ECO:0000256" key="2">
    <source>
        <dbReference type="SAM" id="MobiDB-lite"/>
    </source>
</evidence>
<sequence length="283" mass="32154">MAQTLAQTKQISQSHTFDVSQSHHKTPDDTNSHSVIYSTQNLDLWYGENHALQNINLDIYENQITAIIGPSGCGKSTYIKTLNRMVELVPSVKTAGKILYRDQDIFDQKYSKEQLRTNVGMVFQQPNPFPKSIYDNITYGPKIHGIKNKKVLDEIVEKSLRGAAIWDELKDRLHTNAYSLSGGQQQRVCIARCLAIEPEVILMDEPTSALDPISTLRVEELVQELKEKYTIIMVTHNMQQAARVSDKTAFFLNGYVNEYDDTDKIFSNPSNKKTEDYISGRFG</sequence>
<gene>
    <name evidence="1" type="primary">pstB</name>
    <name type="ordered locus">SACOL1421</name>
</gene>
<organism>
    <name type="scientific">Staphylococcus aureus (strain COL)</name>
    <dbReference type="NCBI Taxonomy" id="93062"/>
    <lineage>
        <taxon>Bacteria</taxon>
        <taxon>Bacillati</taxon>
        <taxon>Bacillota</taxon>
        <taxon>Bacilli</taxon>
        <taxon>Bacillales</taxon>
        <taxon>Staphylococcaceae</taxon>
        <taxon>Staphylococcus</taxon>
    </lineage>
</organism>
<name>PSTB_STAAC</name>
<accession>P69881</accession>
<accession>Q5HG34</accession>
<accession>Q9EX64</accession>